<protein>
    <recommendedName>
        <fullName evidence="1">N-succinylarginine dihydrolase</fullName>
        <ecNumber evidence="1">3.5.3.23</ecNumber>
    </recommendedName>
</protein>
<comment type="function">
    <text evidence="1">Catalyzes the hydrolysis of N(2)-succinylarginine into N(2)-succinylornithine, ammonia and CO(2).</text>
</comment>
<comment type="catalytic activity">
    <reaction evidence="1">
        <text>N(2)-succinyl-L-arginine + 2 H2O + 2 H(+) = N(2)-succinyl-L-ornithine + 2 NH4(+) + CO2</text>
        <dbReference type="Rhea" id="RHEA:19533"/>
        <dbReference type="ChEBI" id="CHEBI:15377"/>
        <dbReference type="ChEBI" id="CHEBI:15378"/>
        <dbReference type="ChEBI" id="CHEBI:16526"/>
        <dbReference type="ChEBI" id="CHEBI:28938"/>
        <dbReference type="ChEBI" id="CHEBI:58241"/>
        <dbReference type="ChEBI" id="CHEBI:58514"/>
        <dbReference type="EC" id="3.5.3.23"/>
    </reaction>
</comment>
<comment type="pathway">
    <text evidence="1">Amino-acid degradation; L-arginine degradation via AST pathway; L-glutamate and succinate from L-arginine: step 2/5.</text>
</comment>
<comment type="subunit">
    <text evidence="1">Homodimer.</text>
</comment>
<comment type="similarity">
    <text evidence="1">Belongs to the succinylarginine dihydrolase family.</text>
</comment>
<proteinExistence type="inferred from homology"/>
<name>ASTB_LEGPA</name>
<dbReference type="EC" id="3.5.3.23" evidence="1"/>
<dbReference type="EMBL" id="CR628336">
    <property type="protein sequence ID" value="CAH12825.1"/>
    <property type="molecule type" value="Genomic_DNA"/>
</dbReference>
<dbReference type="RefSeq" id="WP_011213979.1">
    <property type="nucleotide sequence ID" value="NC_006368.1"/>
</dbReference>
<dbReference type="SMR" id="Q5X4K3"/>
<dbReference type="KEGG" id="lpp:lpp1673"/>
<dbReference type="LegioList" id="lpp1673"/>
<dbReference type="HOGENOM" id="CLU_053835_0_0_6"/>
<dbReference type="UniPathway" id="UPA00185">
    <property type="reaction ID" value="UER00280"/>
</dbReference>
<dbReference type="GO" id="GO:0009015">
    <property type="term" value="F:N-succinylarginine dihydrolase activity"/>
    <property type="evidence" value="ECO:0007669"/>
    <property type="project" value="UniProtKB-UniRule"/>
</dbReference>
<dbReference type="GO" id="GO:0019544">
    <property type="term" value="P:arginine catabolic process to glutamate"/>
    <property type="evidence" value="ECO:0007669"/>
    <property type="project" value="UniProtKB-UniRule"/>
</dbReference>
<dbReference type="GO" id="GO:0019545">
    <property type="term" value="P:arginine catabolic process to succinate"/>
    <property type="evidence" value="ECO:0007669"/>
    <property type="project" value="UniProtKB-UniRule"/>
</dbReference>
<dbReference type="Gene3D" id="3.75.10.20">
    <property type="entry name" value="Succinylarginine dihydrolase"/>
    <property type="match status" value="1"/>
</dbReference>
<dbReference type="HAMAP" id="MF_01172">
    <property type="entry name" value="AstB"/>
    <property type="match status" value="1"/>
</dbReference>
<dbReference type="InterPro" id="IPR037031">
    <property type="entry name" value="AstB_sf"/>
</dbReference>
<dbReference type="InterPro" id="IPR007079">
    <property type="entry name" value="SuccinylArg_d-Hdrlase_AstB"/>
</dbReference>
<dbReference type="NCBIfam" id="TIGR03241">
    <property type="entry name" value="arg_catab_astB"/>
    <property type="match status" value="1"/>
</dbReference>
<dbReference type="NCBIfam" id="NF009789">
    <property type="entry name" value="PRK13281.1"/>
    <property type="match status" value="1"/>
</dbReference>
<dbReference type="PANTHER" id="PTHR30420">
    <property type="entry name" value="N-SUCCINYLARGININE DIHYDROLASE"/>
    <property type="match status" value="1"/>
</dbReference>
<dbReference type="PANTHER" id="PTHR30420:SF2">
    <property type="entry name" value="N-SUCCINYLARGININE DIHYDROLASE"/>
    <property type="match status" value="1"/>
</dbReference>
<dbReference type="Pfam" id="PF04996">
    <property type="entry name" value="AstB"/>
    <property type="match status" value="1"/>
</dbReference>
<dbReference type="SUPFAM" id="SSF55909">
    <property type="entry name" value="Pentein"/>
    <property type="match status" value="1"/>
</dbReference>
<reference key="1">
    <citation type="journal article" date="2004" name="Nat. Genet.">
        <title>Evidence in the Legionella pneumophila genome for exploitation of host cell functions and high genome plasticity.</title>
        <authorList>
            <person name="Cazalet C."/>
            <person name="Rusniok C."/>
            <person name="Brueggemann H."/>
            <person name="Zidane N."/>
            <person name="Magnier A."/>
            <person name="Ma L."/>
            <person name="Tichit M."/>
            <person name="Jarraud S."/>
            <person name="Bouchier C."/>
            <person name="Vandenesch F."/>
            <person name="Kunst F."/>
            <person name="Etienne J."/>
            <person name="Glaser P."/>
            <person name="Buchrieser C."/>
        </authorList>
    </citation>
    <scope>NUCLEOTIDE SEQUENCE [LARGE SCALE GENOMIC DNA]</scope>
    <source>
        <strain>Paris</strain>
    </source>
</reference>
<sequence>MNAYELNMDGLVGQTHHYAGLSSGNIASTNNALSISNPQAAARQGLEKMRQLYNMGLKQGLLPPHQRPNLNLLYQLGFKGSPSEQINKAYKTAPELLSACYSASSMWTANAATVSASVDTEDNKVHFTAANLISNLHRHQEADFSKKLLEFIFSNSDYFNHHPLLPKSMGTSDEGAANHNRLCQSHAHSGINLFVYGKKVLGNHQFEQSPIKYPARQTKEASEAIARNHLLNPERVIFACQNPLAIDQGVFHNDVISVANEHVFLVHEEAFYNQAYVLDQLKEKADFPLVIIQISKEQISVSEAVDTYLFNSQLITLPDQKNMILIAPAECQANLKVKTCIDGLVADSQNPINSVYYLDLKQSMRNGGGPACLRLRVPLNDYELKAMHQGILIDNDLLDILDKWVLKYYRTELKISDLADPQLLYECLDALDELTQILKLGSIYPFQS</sequence>
<gene>
    <name evidence="1" type="primary">astB</name>
    <name type="ordered locus">lpp1673</name>
</gene>
<accession>Q5X4K3</accession>
<evidence type="ECO:0000255" key="1">
    <source>
        <dbReference type="HAMAP-Rule" id="MF_01172"/>
    </source>
</evidence>
<keyword id="KW-0056">Arginine metabolism</keyword>
<keyword id="KW-0378">Hydrolase</keyword>
<feature type="chain" id="PRO_0000262356" description="N-succinylarginine dihydrolase">
    <location>
        <begin position="1"/>
        <end position="448"/>
    </location>
</feature>
<feature type="active site" evidence="1">
    <location>
        <position position="174"/>
    </location>
</feature>
<feature type="active site" evidence="1">
    <location>
        <position position="252"/>
    </location>
</feature>
<feature type="active site" description="Nucleophile" evidence="1">
    <location>
        <position position="372"/>
    </location>
</feature>
<feature type="binding site" evidence="1">
    <location>
        <begin position="19"/>
        <end position="28"/>
    </location>
    <ligand>
        <name>substrate</name>
    </ligand>
</feature>
<feature type="binding site" evidence="1">
    <location>
        <position position="110"/>
    </location>
    <ligand>
        <name>substrate</name>
    </ligand>
</feature>
<feature type="binding site" evidence="1">
    <location>
        <begin position="137"/>
        <end position="138"/>
    </location>
    <ligand>
        <name>substrate</name>
    </ligand>
</feature>
<feature type="binding site" evidence="1">
    <location>
        <position position="216"/>
    </location>
    <ligand>
        <name>substrate</name>
    </ligand>
</feature>
<feature type="binding site" evidence="1">
    <location>
        <position position="254"/>
    </location>
    <ligand>
        <name>substrate</name>
    </ligand>
</feature>
<feature type="binding site" evidence="1">
    <location>
        <position position="366"/>
    </location>
    <ligand>
        <name>substrate</name>
    </ligand>
</feature>
<organism>
    <name type="scientific">Legionella pneumophila (strain Paris)</name>
    <dbReference type="NCBI Taxonomy" id="297246"/>
    <lineage>
        <taxon>Bacteria</taxon>
        <taxon>Pseudomonadati</taxon>
        <taxon>Pseudomonadota</taxon>
        <taxon>Gammaproteobacteria</taxon>
        <taxon>Legionellales</taxon>
        <taxon>Legionellaceae</taxon>
        <taxon>Legionella</taxon>
    </lineage>
</organism>